<reference key="1">
    <citation type="journal article" date="2005" name="BMC Biol.">
        <title>The complete chloroplast DNA sequences of the charophycean green algae Staurastrum and Zygnema reveal that the chloroplast genome underwent extensive changes during the evolution of the Zygnematales.</title>
        <authorList>
            <person name="Turmel M."/>
            <person name="Otis C."/>
            <person name="Lemieux C."/>
        </authorList>
    </citation>
    <scope>NUCLEOTIDE SEQUENCE [LARGE SCALE GENOMIC DNA]</scope>
</reference>
<organism>
    <name type="scientific">Zygnema circumcarinatum</name>
    <name type="common">Green alga</name>
    <dbReference type="NCBI Taxonomy" id="35869"/>
    <lineage>
        <taxon>Eukaryota</taxon>
        <taxon>Viridiplantae</taxon>
        <taxon>Streptophyta</taxon>
        <taxon>Zygnematophyceae</taxon>
        <taxon>Zygnematophycidae</taxon>
        <taxon>Zygnematales</taxon>
        <taxon>Zygnemataceae</taxon>
        <taxon>Zygnema</taxon>
    </lineage>
</organism>
<keyword id="KW-0150">Chloroplast</keyword>
<keyword id="KW-0472">Membrane</keyword>
<keyword id="KW-0520">NAD</keyword>
<keyword id="KW-0521">NADP</keyword>
<keyword id="KW-0934">Plastid</keyword>
<keyword id="KW-0618">Plastoquinone</keyword>
<keyword id="KW-0874">Quinone</keyword>
<keyword id="KW-0793">Thylakoid</keyword>
<keyword id="KW-1278">Translocase</keyword>
<keyword id="KW-0812">Transmembrane</keyword>
<keyword id="KW-1133">Transmembrane helix</keyword>
<keyword id="KW-0813">Transport</keyword>
<geneLocation type="chloroplast"/>
<proteinExistence type="inferred from homology"/>
<sequence>MYTLAGYESFWAFLLIASLVPVLAVGTSSLVAPSSKAAEKRTSYESGIEPMGESWIQFQIRYYMFALVFVVFDVETVFLYPWAMSFQQLGVLAFIEALVFVLVLIIGLVYAWRKGALEWS</sequence>
<protein>
    <recommendedName>
        <fullName evidence="1">NAD(P)H-quinone oxidoreductase subunit 3, chloroplastic</fullName>
        <ecNumber evidence="1">7.1.1.-</ecNumber>
    </recommendedName>
    <alternativeName>
        <fullName evidence="1">NAD(P)H dehydrogenase subunit 3</fullName>
    </alternativeName>
    <alternativeName>
        <fullName evidence="1">NADH-plastoquinone oxidoreductase subunit 3</fullName>
    </alternativeName>
</protein>
<dbReference type="EC" id="7.1.1.-" evidence="1"/>
<dbReference type="EMBL" id="AY958086">
    <property type="protein sequence ID" value="AAX45814.1"/>
    <property type="molecule type" value="Genomic_DNA"/>
</dbReference>
<dbReference type="RefSeq" id="YP_636544.1">
    <property type="nucleotide sequence ID" value="NC_008117.1"/>
</dbReference>
<dbReference type="SMR" id="Q32RI2"/>
<dbReference type="GeneID" id="4108134"/>
<dbReference type="GO" id="GO:0009535">
    <property type="term" value="C:chloroplast thylakoid membrane"/>
    <property type="evidence" value="ECO:0007669"/>
    <property type="project" value="UniProtKB-SubCell"/>
</dbReference>
<dbReference type="GO" id="GO:0030964">
    <property type="term" value="C:NADH dehydrogenase complex"/>
    <property type="evidence" value="ECO:0007669"/>
    <property type="project" value="TreeGrafter"/>
</dbReference>
<dbReference type="GO" id="GO:0008137">
    <property type="term" value="F:NADH dehydrogenase (ubiquinone) activity"/>
    <property type="evidence" value="ECO:0007669"/>
    <property type="project" value="InterPro"/>
</dbReference>
<dbReference type="GO" id="GO:0048038">
    <property type="term" value="F:quinone binding"/>
    <property type="evidence" value="ECO:0007669"/>
    <property type="project" value="UniProtKB-KW"/>
</dbReference>
<dbReference type="GO" id="GO:0019684">
    <property type="term" value="P:photosynthesis, light reaction"/>
    <property type="evidence" value="ECO:0007669"/>
    <property type="project" value="UniProtKB-UniRule"/>
</dbReference>
<dbReference type="FunFam" id="1.20.58.1610:FF:000001">
    <property type="entry name" value="NAD(P)H-quinone oxidoreductase subunit 3, chloroplastic"/>
    <property type="match status" value="1"/>
</dbReference>
<dbReference type="Gene3D" id="1.20.58.1610">
    <property type="entry name" value="NADH:ubiquinone/plastoquinone oxidoreductase, chain 3"/>
    <property type="match status" value="1"/>
</dbReference>
<dbReference type="HAMAP" id="MF_01394">
    <property type="entry name" value="NDH1_NuoA"/>
    <property type="match status" value="1"/>
</dbReference>
<dbReference type="InterPro" id="IPR023043">
    <property type="entry name" value="NAD(P)H_OxRDtase_bac/plastid"/>
</dbReference>
<dbReference type="InterPro" id="IPR000440">
    <property type="entry name" value="NADH_UbQ/plastoQ_OxRdtase_su3"/>
</dbReference>
<dbReference type="InterPro" id="IPR038430">
    <property type="entry name" value="NDAH_ubi_oxred_su3_sf"/>
</dbReference>
<dbReference type="PANTHER" id="PTHR11058">
    <property type="entry name" value="NADH-UBIQUINONE OXIDOREDUCTASE CHAIN 3"/>
    <property type="match status" value="1"/>
</dbReference>
<dbReference type="PANTHER" id="PTHR11058:SF9">
    <property type="entry name" value="NADH-UBIQUINONE OXIDOREDUCTASE CHAIN 3"/>
    <property type="match status" value="1"/>
</dbReference>
<dbReference type="Pfam" id="PF00507">
    <property type="entry name" value="Oxidored_q4"/>
    <property type="match status" value="1"/>
</dbReference>
<evidence type="ECO:0000255" key="1">
    <source>
        <dbReference type="HAMAP-Rule" id="MF_01394"/>
    </source>
</evidence>
<name>NU3C_ZYGCR</name>
<accession>Q32RI2</accession>
<comment type="function">
    <text evidence="1">NDH shuttles electrons from NAD(P)H:plastoquinone, via FMN and iron-sulfur (Fe-S) centers, to quinones in the photosynthetic chain and possibly in a chloroplast respiratory chain. The immediate electron acceptor for the enzyme in this species is believed to be plastoquinone. Couples the redox reaction to proton translocation, and thus conserves the redox energy in a proton gradient.</text>
</comment>
<comment type="catalytic activity">
    <reaction evidence="1">
        <text>a plastoquinone + NADH + (n+1) H(+)(in) = a plastoquinol + NAD(+) + n H(+)(out)</text>
        <dbReference type="Rhea" id="RHEA:42608"/>
        <dbReference type="Rhea" id="RHEA-COMP:9561"/>
        <dbReference type="Rhea" id="RHEA-COMP:9562"/>
        <dbReference type="ChEBI" id="CHEBI:15378"/>
        <dbReference type="ChEBI" id="CHEBI:17757"/>
        <dbReference type="ChEBI" id="CHEBI:57540"/>
        <dbReference type="ChEBI" id="CHEBI:57945"/>
        <dbReference type="ChEBI" id="CHEBI:62192"/>
    </reaction>
</comment>
<comment type="catalytic activity">
    <reaction evidence="1">
        <text>a plastoquinone + NADPH + (n+1) H(+)(in) = a plastoquinol + NADP(+) + n H(+)(out)</text>
        <dbReference type="Rhea" id="RHEA:42612"/>
        <dbReference type="Rhea" id="RHEA-COMP:9561"/>
        <dbReference type="Rhea" id="RHEA-COMP:9562"/>
        <dbReference type="ChEBI" id="CHEBI:15378"/>
        <dbReference type="ChEBI" id="CHEBI:17757"/>
        <dbReference type="ChEBI" id="CHEBI:57783"/>
        <dbReference type="ChEBI" id="CHEBI:58349"/>
        <dbReference type="ChEBI" id="CHEBI:62192"/>
    </reaction>
</comment>
<comment type="subunit">
    <text evidence="1">NDH is composed of at least 16 different subunits, 5 of which are encoded in the nucleus.</text>
</comment>
<comment type="subcellular location">
    <subcellularLocation>
        <location evidence="1">Plastid</location>
        <location evidence="1">Chloroplast thylakoid membrane</location>
        <topology evidence="1">Multi-pass membrane protein</topology>
    </subcellularLocation>
</comment>
<comment type="similarity">
    <text evidence="1">Belongs to the complex I subunit 3 family.</text>
</comment>
<feature type="chain" id="PRO_0000362877" description="NAD(P)H-quinone oxidoreductase subunit 3, chloroplastic">
    <location>
        <begin position="1"/>
        <end position="120"/>
    </location>
</feature>
<feature type="transmembrane region" description="Helical" evidence="1">
    <location>
        <begin position="10"/>
        <end position="30"/>
    </location>
</feature>
<feature type="transmembrane region" description="Helical" evidence="1">
    <location>
        <begin position="64"/>
        <end position="84"/>
    </location>
</feature>
<feature type="transmembrane region" description="Helical" evidence="1">
    <location>
        <begin position="89"/>
        <end position="109"/>
    </location>
</feature>
<gene>
    <name evidence="1" type="primary">ndhC</name>
</gene>